<dbReference type="EC" id="2.7.7.7" evidence="5"/>
<dbReference type="EMBL" id="AB049434">
    <property type="protein sequence ID" value="BAB15800.1"/>
    <property type="molecule type" value="mRNA"/>
</dbReference>
<dbReference type="EMBL" id="AE014297">
    <property type="protein sequence ID" value="AAF54198.1"/>
    <property type="molecule type" value="Genomic_DNA"/>
</dbReference>
<dbReference type="EMBL" id="AE014297">
    <property type="protein sequence ID" value="AAN14307.1"/>
    <property type="molecule type" value="Genomic_DNA"/>
</dbReference>
<dbReference type="EMBL" id="AE014297">
    <property type="protein sequence ID" value="AHN57226.1"/>
    <property type="molecule type" value="Genomic_DNA"/>
</dbReference>
<dbReference type="EMBL" id="AY051762">
    <property type="protein sequence ID" value="AAK93186.1"/>
    <property type="molecule type" value="mRNA"/>
</dbReference>
<dbReference type="RefSeq" id="NP_001287227.1">
    <property type="nucleotide sequence ID" value="NM_001300298.1"/>
</dbReference>
<dbReference type="RefSeq" id="NP_649772.1">
    <property type="nucleotide sequence ID" value="NM_141515.3"/>
</dbReference>
<dbReference type="RefSeq" id="NP_731214.1">
    <property type="nucleotide sequence ID" value="NM_169207.2"/>
</dbReference>
<dbReference type="SMR" id="Q9VHV1"/>
<dbReference type="FunCoup" id="Q9VHV1">
    <property type="interactions" value="1330"/>
</dbReference>
<dbReference type="IntAct" id="Q9VHV1">
    <property type="interactions" value="12"/>
</dbReference>
<dbReference type="STRING" id="7227.FBpp0308676"/>
<dbReference type="PaxDb" id="7227-FBpp0081293"/>
<dbReference type="DNASU" id="40965"/>
<dbReference type="EnsemblMetazoa" id="FBtr0081797">
    <property type="protein sequence ID" value="FBpp0081293"/>
    <property type="gene ID" value="FBgn0037554"/>
</dbReference>
<dbReference type="EnsemblMetazoa" id="FBtr0081798">
    <property type="protein sequence ID" value="FBpp0081294"/>
    <property type="gene ID" value="FBgn0037554"/>
</dbReference>
<dbReference type="EnsemblMetazoa" id="FBtr0339606">
    <property type="protein sequence ID" value="FBpp0308676"/>
    <property type="gene ID" value="FBgn0037554"/>
</dbReference>
<dbReference type="GeneID" id="40965"/>
<dbReference type="KEGG" id="dme:Dmel_CG7602"/>
<dbReference type="UCSC" id="CG7602-RA">
    <property type="organism name" value="d. melanogaster"/>
</dbReference>
<dbReference type="AGR" id="FB:FBgn0037554"/>
<dbReference type="CTD" id="11201"/>
<dbReference type="FlyBase" id="FBgn0037554">
    <property type="gene designation" value="PolI"/>
</dbReference>
<dbReference type="VEuPathDB" id="VectorBase:FBgn0037554"/>
<dbReference type="eggNOG" id="KOG2095">
    <property type="taxonomic scope" value="Eukaryota"/>
</dbReference>
<dbReference type="GeneTree" id="ENSGT00940000159487"/>
<dbReference type="HOGENOM" id="CLU_012348_9_0_1"/>
<dbReference type="InParanoid" id="Q9VHV1"/>
<dbReference type="OMA" id="KIIMRLF"/>
<dbReference type="OrthoDB" id="1747274at2759"/>
<dbReference type="PhylomeDB" id="Q9VHV1"/>
<dbReference type="Reactome" id="R-DME-5656121">
    <property type="pathway name" value="Translesion synthesis by POLI"/>
</dbReference>
<dbReference type="SignaLink" id="Q9VHV1"/>
<dbReference type="BioGRID-ORCS" id="40965">
    <property type="hits" value="0 hits in 1 CRISPR screen"/>
</dbReference>
<dbReference type="GenomeRNAi" id="40965"/>
<dbReference type="PRO" id="PR:Q9VHV1"/>
<dbReference type="Proteomes" id="UP000000803">
    <property type="component" value="Chromosome 3R"/>
</dbReference>
<dbReference type="Bgee" id="FBgn0037554">
    <property type="expression patterns" value="Expressed in indirect flight muscle cell (Drosophila) in body wall and 33 other cell types or tissues"/>
</dbReference>
<dbReference type="GO" id="GO:0005634">
    <property type="term" value="C:nucleus"/>
    <property type="evidence" value="ECO:0007669"/>
    <property type="project" value="UniProtKB-SubCell"/>
</dbReference>
<dbReference type="GO" id="GO:0003684">
    <property type="term" value="F:damaged DNA binding"/>
    <property type="evidence" value="ECO:0007669"/>
    <property type="project" value="InterPro"/>
</dbReference>
<dbReference type="GO" id="GO:0003887">
    <property type="term" value="F:DNA-directed DNA polymerase activity"/>
    <property type="evidence" value="ECO:0000314"/>
    <property type="project" value="FlyBase"/>
</dbReference>
<dbReference type="GO" id="GO:0046872">
    <property type="term" value="F:metal ion binding"/>
    <property type="evidence" value="ECO:0007669"/>
    <property type="project" value="UniProtKB-KW"/>
</dbReference>
<dbReference type="GO" id="GO:0006260">
    <property type="term" value="P:DNA replication"/>
    <property type="evidence" value="ECO:0007669"/>
    <property type="project" value="UniProtKB-KW"/>
</dbReference>
<dbReference type="GO" id="GO:0019985">
    <property type="term" value="P:translesion synthesis"/>
    <property type="evidence" value="ECO:0000314"/>
    <property type="project" value="FlyBase"/>
</dbReference>
<dbReference type="CDD" id="cd01703">
    <property type="entry name" value="PolY_Pol_iota"/>
    <property type="match status" value="1"/>
</dbReference>
<dbReference type="FunFam" id="3.40.1170.60:FF:000006">
    <property type="entry name" value="DNA polymerase iota"/>
    <property type="match status" value="1"/>
</dbReference>
<dbReference type="FunFam" id="3.30.1490.100:FF:000013">
    <property type="entry name" value="DNApol-iota, isoform A"/>
    <property type="match status" value="1"/>
</dbReference>
<dbReference type="FunFam" id="3.30.70.270:FF:000110">
    <property type="entry name" value="DNApol-iota, isoform A"/>
    <property type="match status" value="1"/>
</dbReference>
<dbReference type="Gene3D" id="3.30.70.270">
    <property type="match status" value="1"/>
</dbReference>
<dbReference type="Gene3D" id="3.40.1170.60">
    <property type="match status" value="1"/>
</dbReference>
<dbReference type="Gene3D" id="6.10.250.1630">
    <property type="match status" value="1"/>
</dbReference>
<dbReference type="Gene3D" id="1.10.150.20">
    <property type="entry name" value="5' to 3' exonuclease, C-terminal subdomain"/>
    <property type="match status" value="1"/>
</dbReference>
<dbReference type="Gene3D" id="3.30.1490.100">
    <property type="entry name" value="DNA polymerase, Y-family, little finger domain"/>
    <property type="match status" value="1"/>
</dbReference>
<dbReference type="InterPro" id="IPR043502">
    <property type="entry name" value="DNA/RNA_pol_sf"/>
</dbReference>
<dbReference type="InterPro" id="IPR036775">
    <property type="entry name" value="DNA_pol_Y-fam_lit_finger_sf"/>
</dbReference>
<dbReference type="InterPro" id="IPR017961">
    <property type="entry name" value="DNA_pol_Y-fam_little_finger"/>
</dbReference>
<dbReference type="InterPro" id="IPR043128">
    <property type="entry name" value="Rev_trsase/Diguanyl_cyclase"/>
</dbReference>
<dbReference type="InterPro" id="IPR001126">
    <property type="entry name" value="UmuC"/>
</dbReference>
<dbReference type="PANTHER" id="PTHR46404">
    <property type="entry name" value="DNA POLYMERASE IOTA"/>
    <property type="match status" value="1"/>
</dbReference>
<dbReference type="PANTHER" id="PTHR46404:SF1">
    <property type="entry name" value="DNA POLYMERASE IOTA"/>
    <property type="match status" value="1"/>
</dbReference>
<dbReference type="Pfam" id="PF00817">
    <property type="entry name" value="IMS"/>
    <property type="match status" value="1"/>
</dbReference>
<dbReference type="Pfam" id="PF11799">
    <property type="entry name" value="IMS_C"/>
    <property type="match status" value="1"/>
</dbReference>
<dbReference type="PIRSF" id="PIRSF036603">
    <property type="entry name" value="DPol_eta"/>
    <property type="match status" value="1"/>
</dbReference>
<dbReference type="SUPFAM" id="SSF56672">
    <property type="entry name" value="DNA/RNA polymerases"/>
    <property type="match status" value="1"/>
</dbReference>
<dbReference type="SUPFAM" id="SSF100879">
    <property type="entry name" value="Lesion bypass DNA polymerase (Y-family), little finger domain"/>
    <property type="match status" value="1"/>
</dbReference>
<dbReference type="PROSITE" id="PS50173">
    <property type="entry name" value="UMUC"/>
    <property type="match status" value="1"/>
</dbReference>
<proteinExistence type="evidence at protein level"/>
<gene>
    <name evidence="10" type="primary">PolI</name>
    <name evidence="6" type="synonym">DNApol-iota</name>
    <name evidence="7" type="synonym">DNApolI</name>
    <name evidence="10" type="synonym">drad30B</name>
    <name evidence="10" type="ORF">CG7602</name>
</gene>
<accession>Q9VHV1</accession>
<evidence type="ECO:0000250" key="1">
    <source>
        <dbReference type="UniProtKB" id="Q6R3M4"/>
    </source>
</evidence>
<evidence type="ECO:0000250" key="2">
    <source>
        <dbReference type="UniProtKB" id="Q9UNA4"/>
    </source>
</evidence>
<evidence type="ECO:0000255" key="3">
    <source>
        <dbReference type="PROSITE-ProRule" id="PRU00216"/>
    </source>
</evidence>
<evidence type="ECO:0000256" key="4">
    <source>
        <dbReference type="SAM" id="MobiDB-lite"/>
    </source>
</evidence>
<evidence type="ECO:0000269" key="5">
    <source>
    </source>
</evidence>
<evidence type="ECO:0000303" key="6">
    <source>
    </source>
</evidence>
<evidence type="ECO:0000305" key="7"/>
<evidence type="ECO:0000312" key="8">
    <source>
        <dbReference type="EMBL" id="AAK93186.1"/>
    </source>
</evidence>
<evidence type="ECO:0000312" key="9">
    <source>
        <dbReference type="EMBL" id="BAB15800.1"/>
    </source>
</evidence>
<evidence type="ECO:0000312" key="10">
    <source>
        <dbReference type="FlyBase" id="FBgn0037554"/>
    </source>
</evidence>
<evidence type="ECO:0000312" key="11">
    <source>
        <dbReference type="Proteomes" id="UP000000803"/>
    </source>
</evidence>
<feature type="chain" id="PRO_0000448481" description="DNA polymerase iota">
    <location>
        <begin position="1"/>
        <end position="737"/>
    </location>
</feature>
<feature type="domain" description="UmuC" evidence="3">
    <location>
        <begin position="17"/>
        <end position="231"/>
    </location>
</feature>
<feature type="region of interest" description="DNA-binding" evidence="2">
    <location>
        <begin position="212"/>
        <end position="277"/>
    </location>
</feature>
<feature type="region of interest" description="DNA-binding" evidence="2">
    <location>
        <begin position="288"/>
        <end position="413"/>
    </location>
</feature>
<feature type="region of interest" description="Disordered" evidence="4">
    <location>
        <begin position="443"/>
        <end position="464"/>
    </location>
</feature>
<feature type="region of interest" description="Disordered" evidence="4">
    <location>
        <begin position="482"/>
        <end position="515"/>
    </location>
</feature>
<feature type="region of interest" description="Disordered" evidence="4">
    <location>
        <begin position="557"/>
        <end position="581"/>
    </location>
</feature>
<feature type="region of interest" description="Disordered" evidence="4">
    <location>
        <begin position="607"/>
        <end position="643"/>
    </location>
</feature>
<feature type="short sequence motif" description="Ubiquitin-binding (UBM)" evidence="1">
    <location>
        <begin position="669"/>
        <end position="686"/>
    </location>
</feature>
<feature type="compositionally biased region" description="Polar residues" evidence="4">
    <location>
        <begin position="491"/>
        <end position="502"/>
    </location>
</feature>
<feature type="compositionally biased region" description="Low complexity" evidence="4">
    <location>
        <begin position="563"/>
        <end position="577"/>
    </location>
</feature>
<feature type="compositionally biased region" description="Low complexity" evidence="4">
    <location>
        <begin position="607"/>
        <end position="618"/>
    </location>
</feature>
<feature type="compositionally biased region" description="Low complexity" evidence="4">
    <location>
        <begin position="632"/>
        <end position="643"/>
    </location>
</feature>
<feature type="active site" evidence="3 5">
    <location>
        <position position="114"/>
    </location>
</feature>
<feature type="binding site" evidence="2">
    <location>
        <position position="21"/>
    </location>
    <ligand>
        <name>Mg(2+)</name>
        <dbReference type="ChEBI" id="CHEBI:18420"/>
    </ligand>
</feature>
<feature type="binding site" evidence="2">
    <location>
        <position position="26"/>
    </location>
    <ligand>
        <name>a 2'-deoxyribonucleoside 5'-triphosphate</name>
        <dbReference type="ChEBI" id="CHEBI:61560"/>
    </ligand>
</feature>
<feature type="binding site" evidence="2">
    <location>
        <position position="58"/>
    </location>
    <ligand>
        <name>a 2'-deoxyribonucleoside 5'-triphosphate</name>
        <dbReference type="ChEBI" id="CHEBI:61560"/>
    </ligand>
</feature>
<feature type="binding site" evidence="2">
    <location>
        <position position="113"/>
    </location>
    <ligand>
        <name>Mg(2+)</name>
        <dbReference type="ChEBI" id="CHEBI:18420"/>
    </ligand>
</feature>
<feature type="mutagenesis site" description="Loss of catalytic activity in vitro." evidence="5">
    <original>DE</original>
    <variation>AA</variation>
    <location>
        <begin position="113"/>
        <end position="114"/>
    </location>
</feature>
<reference evidence="9" key="1">
    <citation type="journal article" date="2001" name="J. Biol. Chem.">
        <title>Mutagenic and nonmutagenic bypass of DNA lesions by Drosophila DNA polymerases dpoleta and dpoliota.</title>
        <authorList>
            <person name="Ishikawa T."/>
            <person name="Uematsu N."/>
            <person name="Mizukoshi T."/>
            <person name="Iwai S."/>
            <person name="Iwasaki H."/>
            <person name="Masutani C."/>
            <person name="Hanaoka F."/>
            <person name="Ueda R."/>
            <person name="Ohmori H."/>
            <person name="Todo T."/>
        </authorList>
    </citation>
    <scope>NUCLEOTIDE SEQUENCE [MRNA]</scope>
    <scope>FUNCTION</scope>
    <scope>ACTIVE SITE</scope>
    <scope>CATALYTIC ACTIVITY</scope>
    <scope>MUTAGENESIS OF 113-ASP-GLU-114</scope>
</reference>
<reference evidence="7" key="2">
    <citation type="journal article" date="2000" name="Science">
        <title>The genome sequence of Drosophila melanogaster.</title>
        <authorList>
            <person name="Adams M.D."/>
            <person name="Celniker S.E."/>
            <person name="Holt R.A."/>
            <person name="Evans C.A."/>
            <person name="Gocayne J.D."/>
            <person name="Amanatides P.G."/>
            <person name="Scherer S.E."/>
            <person name="Li P.W."/>
            <person name="Hoskins R.A."/>
            <person name="Galle R.F."/>
            <person name="George R.A."/>
            <person name="Lewis S.E."/>
            <person name="Richards S."/>
            <person name="Ashburner M."/>
            <person name="Henderson S.N."/>
            <person name="Sutton G.G."/>
            <person name="Wortman J.R."/>
            <person name="Yandell M.D."/>
            <person name="Zhang Q."/>
            <person name="Chen L.X."/>
            <person name="Brandon R.C."/>
            <person name="Rogers Y.-H.C."/>
            <person name="Blazej R.G."/>
            <person name="Champe M."/>
            <person name="Pfeiffer B.D."/>
            <person name="Wan K.H."/>
            <person name="Doyle C."/>
            <person name="Baxter E.G."/>
            <person name="Helt G."/>
            <person name="Nelson C.R."/>
            <person name="Miklos G.L.G."/>
            <person name="Abril J.F."/>
            <person name="Agbayani A."/>
            <person name="An H.-J."/>
            <person name="Andrews-Pfannkoch C."/>
            <person name="Baldwin D."/>
            <person name="Ballew R.M."/>
            <person name="Basu A."/>
            <person name="Baxendale J."/>
            <person name="Bayraktaroglu L."/>
            <person name="Beasley E.M."/>
            <person name="Beeson K.Y."/>
            <person name="Benos P.V."/>
            <person name="Berman B.P."/>
            <person name="Bhandari D."/>
            <person name="Bolshakov S."/>
            <person name="Borkova D."/>
            <person name="Botchan M.R."/>
            <person name="Bouck J."/>
            <person name="Brokstein P."/>
            <person name="Brottier P."/>
            <person name="Burtis K.C."/>
            <person name="Busam D.A."/>
            <person name="Butler H."/>
            <person name="Cadieu E."/>
            <person name="Center A."/>
            <person name="Chandra I."/>
            <person name="Cherry J.M."/>
            <person name="Cawley S."/>
            <person name="Dahlke C."/>
            <person name="Davenport L.B."/>
            <person name="Davies P."/>
            <person name="de Pablos B."/>
            <person name="Delcher A."/>
            <person name="Deng Z."/>
            <person name="Mays A.D."/>
            <person name="Dew I."/>
            <person name="Dietz S.M."/>
            <person name="Dodson K."/>
            <person name="Doup L.E."/>
            <person name="Downes M."/>
            <person name="Dugan-Rocha S."/>
            <person name="Dunkov B.C."/>
            <person name="Dunn P."/>
            <person name="Durbin K.J."/>
            <person name="Evangelista C.C."/>
            <person name="Ferraz C."/>
            <person name="Ferriera S."/>
            <person name="Fleischmann W."/>
            <person name="Fosler C."/>
            <person name="Gabrielian A.E."/>
            <person name="Garg N.S."/>
            <person name="Gelbart W.M."/>
            <person name="Glasser K."/>
            <person name="Glodek A."/>
            <person name="Gong F."/>
            <person name="Gorrell J.H."/>
            <person name="Gu Z."/>
            <person name="Guan P."/>
            <person name="Harris M."/>
            <person name="Harris N.L."/>
            <person name="Harvey D.A."/>
            <person name="Heiman T.J."/>
            <person name="Hernandez J.R."/>
            <person name="Houck J."/>
            <person name="Hostin D."/>
            <person name="Houston K.A."/>
            <person name="Howland T.J."/>
            <person name="Wei M.-H."/>
            <person name="Ibegwam C."/>
            <person name="Jalali M."/>
            <person name="Kalush F."/>
            <person name="Karpen G.H."/>
            <person name="Ke Z."/>
            <person name="Kennison J.A."/>
            <person name="Ketchum K.A."/>
            <person name="Kimmel B.E."/>
            <person name="Kodira C.D."/>
            <person name="Kraft C.L."/>
            <person name="Kravitz S."/>
            <person name="Kulp D."/>
            <person name="Lai Z."/>
            <person name="Lasko P."/>
            <person name="Lei Y."/>
            <person name="Levitsky A.A."/>
            <person name="Li J.H."/>
            <person name="Li Z."/>
            <person name="Liang Y."/>
            <person name="Lin X."/>
            <person name="Liu X."/>
            <person name="Mattei B."/>
            <person name="McIntosh T.C."/>
            <person name="McLeod M.P."/>
            <person name="McPherson D."/>
            <person name="Merkulov G."/>
            <person name="Milshina N.V."/>
            <person name="Mobarry C."/>
            <person name="Morris J."/>
            <person name="Moshrefi A."/>
            <person name="Mount S.M."/>
            <person name="Moy M."/>
            <person name="Murphy B."/>
            <person name="Murphy L."/>
            <person name="Muzny D.M."/>
            <person name="Nelson D.L."/>
            <person name="Nelson D.R."/>
            <person name="Nelson K.A."/>
            <person name="Nixon K."/>
            <person name="Nusskern D.R."/>
            <person name="Pacleb J.M."/>
            <person name="Palazzolo M."/>
            <person name="Pittman G.S."/>
            <person name="Pan S."/>
            <person name="Pollard J."/>
            <person name="Puri V."/>
            <person name="Reese M.G."/>
            <person name="Reinert K."/>
            <person name="Remington K."/>
            <person name="Saunders R.D.C."/>
            <person name="Scheeler F."/>
            <person name="Shen H."/>
            <person name="Shue B.C."/>
            <person name="Siden-Kiamos I."/>
            <person name="Simpson M."/>
            <person name="Skupski M.P."/>
            <person name="Smith T.J."/>
            <person name="Spier E."/>
            <person name="Spradling A.C."/>
            <person name="Stapleton M."/>
            <person name="Strong R."/>
            <person name="Sun E."/>
            <person name="Svirskas R."/>
            <person name="Tector C."/>
            <person name="Turner R."/>
            <person name="Venter E."/>
            <person name="Wang A.H."/>
            <person name="Wang X."/>
            <person name="Wang Z.-Y."/>
            <person name="Wassarman D.A."/>
            <person name="Weinstock G.M."/>
            <person name="Weissenbach J."/>
            <person name="Williams S.M."/>
            <person name="Woodage T."/>
            <person name="Worley K.C."/>
            <person name="Wu D."/>
            <person name="Yang S."/>
            <person name="Yao Q.A."/>
            <person name="Ye J."/>
            <person name="Yeh R.-F."/>
            <person name="Zaveri J.S."/>
            <person name="Zhan M."/>
            <person name="Zhang G."/>
            <person name="Zhao Q."/>
            <person name="Zheng L."/>
            <person name="Zheng X.H."/>
            <person name="Zhong F.N."/>
            <person name="Zhong W."/>
            <person name="Zhou X."/>
            <person name="Zhu S.C."/>
            <person name="Zhu X."/>
            <person name="Smith H.O."/>
            <person name="Gibbs R.A."/>
            <person name="Myers E.W."/>
            <person name="Rubin G.M."/>
            <person name="Venter J.C."/>
        </authorList>
    </citation>
    <scope>NUCLEOTIDE SEQUENCE [LARGE SCALE GENOMIC DNA]</scope>
    <source>
        <strain>Berkeley</strain>
    </source>
</reference>
<reference evidence="7" key="3">
    <citation type="journal article" date="2002" name="Genome Biol.">
        <title>Annotation of the Drosophila melanogaster euchromatic genome: a systematic review.</title>
        <authorList>
            <person name="Misra S."/>
            <person name="Crosby M.A."/>
            <person name="Mungall C.J."/>
            <person name="Matthews B.B."/>
            <person name="Campbell K.S."/>
            <person name="Hradecky P."/>
            <person name="Huang Y."/>
            <person name="Kaminker J.S."/>
            <person name="Millburn G.H."/>
            <person name="Prochnik S.E."/>
            <person name="Smith C.D."/>
            <person name="Tupy J.L."/>
            <person name="Whitfield E.J."/>
            <person name="Bayraktaroglu L."/>
            <person name="Berman B.P."/>
            <person name="Bettencourt B.R."/>
            <person name="Celniker S.E."/>
            <person name="de Grey A.D.N.J."/>
            <person name="Drysdale R.A."/>
            <person name="Harris N.L."/>
            <person name="Richter J."/>
            <person name="Russo S."/>
            <person name="Schroeder A.J."/>
            <person name="Shu S.Q."/>
            <person name="Stapleton M."/>
            <person name="Yamada C."/>
            <person name="Ashburner M."/>
            <person name="Gelbart W.M."/>
            <person name="Rubin G.M."/>
            <person name="Lewis S.E."/>
        </authorList>
    </citation>
    <scope>GENOME REANNOTATION</scope>
    <source>
        <strain>Berkeley</strain>
    </source>
</reference>
<reference evidence="8" key="4">
    <citation type="journal article" date="2002" name="Genome Biol.">
        <title>A Drosophila full-length cDNA resource.</title>
        <authorList>
            <person name="Stapleton M."/>
            <person name="Carlson J.W."/>
            <person name="Brokstein P."/>
            <person name="Yu C."/>
            <person name="Champe M."/>
            <person name="George R.A."/>
            <person name="Guarin H."/>
            <person name="Kronmiller B."/>
            <person name="Pacleb J.M."/>
            <person name="Park S."/>
            <person name="Wan K.H."/>
            <person name="Rubin G.M."/>
            <person name="Celniker S.E."/>
        </authorList>
    </citation>
    <scope>NUCLEOTIDE SEQUENCE [LARGE SCALE MRNA]</scope>
    <source>
        <strain evidence="8">Berkeley</strain>
        <tissue evidence="8">Embryo</tissue>
    </source>
</reference>
<protein>
    <recommendedName>
        <fullName evidence="6 10">DNA polymerase iota</fullName>
        <ecNumber evidence="5">2.7.7.7</ecNumber>
    </recommendedName>
</protein>
<organism evidence="11">
    <name type="scientific">Drosophila melanogaster</name>
    <name type="common">Fruit fly</name>
    <dbReference type="NCBI Taxonomy" id="7227"/>
    <lineage>
        <taxon>Eukaryota</taxon>
        <taxon>Metazoa</taxon>
        <taxon>Ecdysozoa</taxon>
        <taxon>Arthropoda</taxon>
        <taxon>Hexapoda</taxon>
        <taxon>Insecta</taxon>
        <taxon>Pterygota</taxon>
        <taxon>Neoptera</taxon>
        <taxon>Endopterygota</taxon>
        <taxon>Diptera</taxon>
        <taxon>Brachycera</taxon>
        <taxon>Muscomorpha</taxon>
        <taxon>Ephydroidea</taxon>
        <taxon>Drosophilidae</taxon>
        <taxon>Drosophila</taxon>
        <taxon>Sophophora</taxon>
    </lineage>
</organism>
<comment type="function">
    <text evidence="2 5">Error-prone DNA polymerase specifically involved in DNA repair (PubMed:11297519). Plays an important role in translesion synthesis, where the normal high-fidelity DNA polymerases cannot proceed and DNA synthesis stalls (PubMed:11297519). Favors Hoogsteen base-pairing in the active site (By similarity). Inserts the correct base with higher fidelity opposite an adenosine template (PubMed:11297519). Exhibits low fidelity and efficiency opposite a thymidine template, where it will preferentially insert guanosine (PubMed:11297519). Forms a Schiff base with 5'-deoxyribose phosphate at abasic sites, but may not have lyase activity (By similarity).</text>
</comment>
<comment type="catalytic activity">
    <reaction evidence="5">
        <text>DNA(n) + a 2'-deoxyribonucleoside 5'-triphosphate = DNA(n+1) + diphosphate</text>
        <dbReference type="Rhea" id="RHEA:22508"/>
        <dbReference type="Rhea" id="RHEA-COMP:17339"/>
        <dbReference type="Rhea" id="RHEA-COMP:17340"/>
        <dbReference type="ChEBI" id="CHEBI:33019"/>
        <dbReference type="ChEBI" id="CHEBI:61560"/>
        <dbReference type="ChEBI" id="CHEBI:173112"/>
        <dbReference type="EC" id="2.7.7.7"/>
    </reaction>
</comment>
<comment type="cofactor">
    <cofactor evidence="2">
        <name>Mg(2+)</name>
        <dbReference type="ChEBI" id="CHEBI:18420"/>
    </cofactor>
    <cofactor evidence="2">
        <name>Mn(2+)</name>
        <dbReference type="ChEBI" id="CHEBI:29035"/>
    </cofactor>
    <text evidence="2">Binds nucleotide much more tightly and catalyzes nucleotide insertion much more efficiently in the presence of Mg(2+) than in the presence of Mn(2+).</text>
</comment>
<comment type="subcellular location">
    <subcellularLocation>
        <location evidence="2">Nucleus</location>
    </subcellularLocation>
</comment>
<comment type="domain">
    <text evidence="2">The catalytic core consists of fingers, palm and thumb subdomains, but the fingers and thumb subdomains are much smaller than in high-fidelity polymerases; residues from five sequence motifs of the Y-family cluster around an active site cleft that can accommodate DNA and nucleotide substrates with relaxed geometric constraints, with consequently higher rates of misincorporation and low processivity.</text>
</comment>
<comment type="similarity">
    <text evidence="7">Belongs to the DNA polymerase type-Y family.</text>
</comment>
<sequence>MDFASVLGKSEAHQRTIIHLDMDYFYAQVEEIRDPTLRSKALGIQQKNIVVTCNYVARAKGVTKLMLIAEAQRICPDLVLVNGEDLAPYRQMSQRIFDLLLNYTPLVEKLGFDENFMDVTALVELRQAHVAEALLRPPVGHTYPADGTPLSNCDCGCAQRLAIGTRIAQEIREELKLRLGITCCAGIAYNKLLAKLVGSSHEPNQQTVLVSTYAEQFMRELGDLKRVTGIGQKTQCLLLEAGMSSVEQLQQCDMDVMRKKFGFETATRLRDLAFGRDTSLVRPSGKPKTIGMEDACKPISVRTDVEERFRMLLKRLVEQVAEDGRVPIAIKVVLRKFDSQKKSSHRETKQANILPSLFKTSMCPGETGVSKVQLADGAQDKLLKIVMRLFERIVDMSKPFNITLLGLAFSKFQERKVGSSSIANFLIKKADLEVQSITSLTNTSLTSPTAESPTSDECAFRSSPTTFKPSDQFYRRRATTASPVPMLLDNGSESAATNSDFSDFSETEVEPSPKKSRIGRLLVSKRSRLAADVGDSAAEVASPSKLRVCDLRLNSRDSEKDFPMSTTPSTSTSAPAPRFRTVQPPNTLLQRIDGSLRFVTTRTASRLSSNASSTASSPLPSPMDDSIAMSAPSTTTLPFPSPTTTAVVTSSSSTATCDALTNIVCPAGVDAEVFKELPVELQTELIASWRSSLVAAVEQTNGTGAATSAAIASGAPATATTASGQKNTLYRYFLRNK</sequence>
<name>POLI_DROME</name>
<keyword id="KW-0227">DNA damage</keyword>
<keyword id="KW-0234">DNA repair</keyword>
<keyword id="KW-0235">DNA replication</keyword>
<keyword id="KW-0237">DNA synthesis</keyword>
<keyword id="KW-0238">DNA-binding</keyword>
<keyword id="KW-0239">DNA-directed DNA polymerase</keyword>
<keyword id="KW-0460">Magnesium</keyword>
<keyword id="KW-0464">Manganese</keyword>
<keyword id="KW-0479">Metal-binding</keyword>
<keyword id="KW-0548">Nucleotidyltransferase</keyword>
<keyword id="KW-0539">Nucleus</keyword>
<keyword id="KW-1185">Reference proteome</keyword>
<keyword id="KW-0704">Schiff base</keyword>
<keyword id="KW-0808">Transferase</keyword>